<protein>
    <recommendedName>
        <fullName>Dual specificity phosphatase 28</fullName>
        <ecNumber>3.1.3.16</ecNumber>
        <ecNumber>3.1.3.48</ecNumber>
    </recommendedName>
</protein>
<reference key="1">
    <citation type="journal article" date="2004" name="Genome Res.">
        <title>The status, quality, and expansion of the NIH full-length cDNA project: the Mammalian Gene Collection (MGC).</title>
        <authorList>
            <consortium name="The MGC Project Team"/>
        </authorList>
    </citation>
    <scope>NUCLEOTIDE SEQUENCE [LARGE SCALE MRNA]</scope>
    <source>
        <tissue>Testis</tissue>
    </source>
</reference>
<reference key="2">
    <citation type="journal article" date="2014" name="Acta Crystallogr. D">
        <title>The family-wide structure and function of human dual-specificity protein phosphatases.</title>
        <authorList>
            <person name="Jeong D.G."/>
            <person name="Wei C.H."/>
            <person name="Ku B."/>
            <person name="Jeon T.J."/>
            <person name="Chien P.N."/>
            <person name="Kim J.K."/>
            <person name="Park S.Y."/>
            <person name="Hwang H.S."/>
            <person name="Ryu S.Y."/>
            <person name="Park H."/>
            <person name="Kim D.S."/>
            <person name="Kim S.J."/>
            <person name="Ryu S.E."/>
        </authorList>
    </citation>
    <scope>FUNCTION</scope>
</reference>
<reference evidence="6 7" key="3">
    <citation type="journal article" date="2017" name="PLoS ONE">
        <title>Structural and biochemical analysis of atypically low dephosphorylating activity of human dual-specificity phosphatase 28.</title>
        <authorList>
            <person name="Ku B."/>
            <person name="Hong W."/>
            <person name="Keum C.W."/>
            <person name="Kim M."/>
            <person name="Ryu H."/>
            <person name="Jeon D."/>
            <person name="Shin H.C."/>
            <person name="Kim J.H."/>
            <person name="Kim S.J."/>
            <person name="Ryu S.E."/>
        </authorList>
    </citation>
    <scope>X-RAY CRYSTALLOGRAPHY (2.10 ANGSTROMS)</scope>
    <scope>FUNCTION</scope>
    <scope>CATALYTIC ACTIVITY</scope>
    <scope>SUBUNIT</scope>
    <scope>ACTIVE SITE</scope>
    <scope>BIOPHYSICOCHEMICAL PROPERTIES</scope>
    <scope>MUTAGENESIS OF TYR-102; CYS-103; ASN-105 AND ARG-107</scope>
</reference>
<gene>
    <name type="primary">DUSP28</name>
</gene>
<keyword id="KW-0002">3D-structure</keyword>
<keyword id="KW-0378">Hydrolase</keyword>
<keyword id="KW-0904">Protein phosphatase</keyword>
<keyword id="KW-1267">Proteomics identification</keyword>
<keyword id="KW-1185">Reference proteome</keyword>
<evidence type="ECO:0000255" key="1">
    <source>
        <dbReference type="PROSITE-ProRule" id="PRU00160"/>
    </source>
</evidence>
<evidence type="ECO:0000269" key="2">
    <source>
    </source>
</evidence>
<evidence type="ECO:0000269" key="3">
    <source>
    </source>
</evidence>
<evidence type="ECO:0000305" key="4"/>
<evidence type="ECO:0000305" key="5">
    <source>
    </source>
</evidence>
<evidence type="ECO:0007744" key="6">
    <source>
        <dbReference type="PDB" id="5Y15"/>
    </source>
</evidence>
<evidence type="ECO:0007744" key="7">
    <source>
        <dbReference type="PDB" id="5Y16"/>
    </source>
</evidence>
<evidence type="ECO:0007829" key="8">
    <source>
        <dbReference type="PDB" id="5Y15"/>
    </source>
</evidence>
<comment type="function">
    <text evidence="2 3">Has phosphatase activity with the synthetic substrate 6,8-difluoro-4-methylumbelliferyl phosphate (in vitro) (PubMed:24531476, PubMed:29121083). Has almost no detectable activity with phosphotyrosine, even less activity with phosphothreonine and displays complete lack of activity with phosphoserine (PubMed:29121083). The poor activity with phosphotyrosine may be due to steric hindrance by bulky amino acid sidechains that obstruct access to the active site (PubMed:29121083).</text>
</comment>
<comment type="catalytic activity">
    <reaction>
        <text>O-phospho-L-tyrosyl-[protein] + H2O = L-tyrosyl-[protein] + phosphate</text>
        <dbReference type="Rhea" id="RHEA:10684"/>
        <dbReference type="Rhea" id="RHEA-COMP:10136"/>
        <dbReference type="Rhea" id="RHEA-COMP:20101"/>
        <dbReference type="ChEBI" id="CHEBI:15377"/>
        <dbReference type="ChEBI" id="CHEBI:43474"/>
        <dbReference type="ChEBI" id="CHEBI:46858"/>
        <dbReference type="ChEBI" id="CHEBI:61978"/>
        <dbReference type="EC" id="3.1.3.48"/>
    </reaction>
</comment>
<comment type="catalytic activity">
    <reaction>
        <text>O-phospho-L-seryl-[protein] + H2O = L-seryl-[protein] + phosphate</text>
        <dbReference type="Rhea" id="RHEA:20629"/>
        <dbReference type="Rhea" id="RHEA-COMP:9863"/>
        <dbReference type="Rhea" id="RHEA-COMP:11604"/>
        <dbReference type="ChEBI" id="CHEBI:15377"/>
        <dbReference type="ChEBI" id="CHEBI:29999"/>
        <dbReference type="ChEBI" id="CHEBI:43474"/>
        <dbReference type="ChEBI" id="CHEBI:83421"/>
        <dbReference type="EC" id="3.1.3.16"/>
    </reaction>
</comment>
<comment type="catalytic activity">
    <reaction>
        <text>O-phospho-L-threonyl-[protein] + H2O = L-threonyl-[protein] + phosphate</text>
        <dbReference type="Rhea" id="RHEA:47004"/>
        <dbReference type="Rhea" id="RHEA-COMP:11060"/>
        <dbReference type="Rhea" id="RHEA-COMP:11605"/>
        <dbReference type="ChEBI" id="CHEBI:15377"/>
        <dbReference type="ChEBI" id="CHEBI:30013"/>
        <dbReference type="ChEBI" id="CHEBI:43474"/>
        <dbReference type="ChEBI" id="CHEBI:61977"/>
        <dbReference type="EC" id="3.1.3.16"/>
    </reaction>
</comment>
<comment type="biophysicochemical properties">
    <phDependence>
        <text evidence="3">Optimum pH is 6.0.</text>
    </phDependence>
</comment>
<comment type="subunit">
    <text evidence="3">Monomer.</text>
</comment>
<comment type="similarity">
    <text evidence="4">Belongs to the protein-tyrosine phosphatase family. Non-receptor class dual specificity subfamily.</text>
</comment>
<proteinExistence type="evidence at protein level"/>
<name>DUS28_HUMAN</name>
<feature type="chain" id="PRO_0000302840" description="Dual specificity phosphatase 28">
    <location>
        <begin position="1"/>
        <end position="176"/>
    </location>
</feature>
<feature type="domain" description="Tyrosine-protein phosphatase" evidence="1">
    <location>
        <begin position="17"/>
        <end position="159"/>
    </location>
</feature>
<feature type="active site" description="Phosphocysteine intermediate" evidence="1 5">
    <location>
        <position position="103"/>
    </location>
</feature>
<feature type="mutagenesis site" description="Decreases the already low catalytic activity." evidence="3">
    <original>Y</original>
    <variation>H</variation>
    <location>
        <position position="102"/>
    </location>
</feature>
<feature type="mutagenesis site" description="Loss of catalytic activity." evidence="3">
    <original>C</original>
    <variation>S</variation>
    <location>
        <position position="103"/>
    </location>
</feature>
<feature type="mutagenesis site" description="Increases activity with phosphotyrosine; when associated with V-107." evidence="3">
    <original>N</original>
    <variation>A</variation>
    <location>
        <position position="105"/>
    </location>
</feature>
<feature type="mutagenesis site" description="Increases activity with phosphotyrosine; when associated with A-105." evidence="3">
    <original>R</original>
    <variation>V</variation>
    <location>
        <position position="107"/>
    </location>
</feature>
<feature type="strand" evidence="8">
    <location>
        <begin position="18"/>
        <end position="23"/>
    </location>
</feature>
<feature type="strand" evidence="8">
    <location>
        <begin position="26"/>
        <end position="29"/>
    </location>
</feature>
<feature type="helix" evidence="8">
    <location>
        <begin position="33"/>
        <end position="35"/>
    </location>
</feature>
<feature type="helix" evidence="8">
    <location>
        <begin position="37"/>
        <end position="42"/>
    </location>
</feature>
<feature type="strand" evidence="8">
    <location>
        <begin position="45"/>
        <end position="50"/>
    </location>
</feature>
<feature type="strand" evidence="8">
    <location>
        <begin position="52"/>
        <end position="55"/>
    </location>
</feature>
<feature type="strand" evidence="8">
    <location>
        <begin position="64"/>
        <end position="67"/>
    </location>
</feature>
<feature type="helix" evidence="8">
    <location>
        <begin position="79"/>
        <end position="94"/>
    </location>
</feature>
<feature type="strand" evidence="8">
    <location>
        <begin position="98"/>
        <end position="102"/>
    </location>
</feature>
<feature type="strand" evidence="8">
    <location>
        <begin position="104"/>
        <end position="108"/>
    </location>
</feature>
<feature type="helix" evidence="8">
    <location>
        <begin position="109"/>
        <end position="121"/>
    </location>
</feature>
<feature type="helix" evidence="8">
    <location>
        <begin position="126"/>
        <end position="136"/>
    </location>
</feature>
<feature type="helix" evidence="8">
    <location>
        <begin position="144"/>
        <end position="158"/>
    </location>
</feature>
<organism>
    <name type="scientific">Homo sapiens</name>
    <name type="common">Human</name>
    <dbReference type="NCBI Taxonomy" id="9606"/>
    <lineage>
        <taxon>Eukaryota</taxon>
        <taxon>Metazoa</taxon>
        <taxon>Chordata</taxon>
        <taxon>Craniata</taxon>
        <taxon>Vertebrata</taxon>
        <taxon>Euteleostomi</taxon>
        <taxon>Mammalia</taxon>
        <taxon>Eutheria</taxon>
        <taxon>Euarchontoglires</taxon>
        <taxon>Primates</taxon>
        <taxon>Haplorrhini</taxon>
        <taxon>Catarrhini</taxon>
        <taxon>Hominidae</taxon>
        <taxon>Homo</taxon>
    </lineage>
</organism>
<accession>Q4G0W2</accession>
<dbReference type="EC" id="3.1.3.16"/>
<dbReference type="EC" id="3.1.3.48"/>
<dbReference type="EMBL" id="BC036198">
    <property type="protein sequence ID" value="AAH36198.1"/>
    <property type="molecule type" value="mRNA"/>
</dbReference>
<dbReference type="CCDS" id="CCDS33418.1"/>
<dbReference type="RefSeq" id="NP_001028747.1">
    <property type="nucleotide sequence ID" value="NM_001033575.1"/>
</dbReference>
<dbReference type="RefSeq" id="NP_001357394.1">
    <property type="nucleotide sequence ID" value="NM_001370465.2"/>
</dbReference>
<dbReference type="PDB" id="5Y15">
    <property type="method" value="X-ray"/>
    <property type="resolution" value="2.10 A"/>
    <property type="chains" value="A/B=1-176"/>
</dbReference>
<dbReference type="PDB" id="5Y16">
    <property type="method" value="X-ray"/>
    <property type="resolution" value="2.40 A"/>
    <property type="chains" value="A/B=1-176"/>
</dbReference>
<dbReference type="PDBsum" id="5Y15"/>
<dbReference type="PDBsum" id="5Y16"/>
<dbReference type="SMR" id="Q4G0W2"/>
<dbReference type="BioGRID" id="130042">
    <property type="interactions" value="63"/>
</dbReference>
<dbReference type="FunCoup" id="Q4G0W2">
    <property type="interactions" value="42"/>
</dbReference>
<dbReference type="IntAct" id="Q4G0W2">
    <property type="interactions" value="4"/>
</dbReference>
<dbReference type="MINT" id="Q4G0W2"/>
<dbReference type="STRING" id="9606.ENSP00000385885"/>
<dbReference type="DEPOD" id="DUSP28"/>
<dbReference type="iPTMnet" id="Q4G0W2"/>
<dbReference type="PhosphoSitePlus" id="Q4G0W2"/>
<dbReference type="SwissPalm" id="Q4G0W2"/>
<dbReference type="BioMuta" id="DUSP28"/>
<dbReference type="DMDM" id="121943916"/>
<dbReference type="MassIVE" id="Q4G0W2"/>
<dbReference type="PaxDb" id="9606-ENSP00000385885"/>
<dbReference type="PeptideAtlas" id="Q4G0W2"/>
<dbReference type="ProteomicsDB" id="62133"/>
<dbReference type="Antibodypedia" id="50666">
    <property type="antibodies" value="22 antibodies from 12 providers"/>
</dbReference>
<dbReference type="DNASU" id="285193"/>
<dbReference type="Ensembl" id="ENST00000343217.6">
    <property type="protein sequence ID" value="ENSP00000344235.2"/>
    <property type="gene ID" value="ENSG00000188542.10"/>
</dbReference>
<dbReference type="Ensembl" id="ENST00000405954.2">
    <property type="protein sequence ID" value="ENSP00000385885.2"/>
    <property type="gene ID" value="ENSG00000188542.10"/>
</dbReference>
<dbReference type="GeneID" id="285193"/>
<dbReference type="KEGG" id="hsa:285193"/>
<dbReference type="MANE-Select" id="ENST00000405954.2">
    <property type="protein sequence ID" value="ENSP00000385885.2"/>
    <property type="RefSeq nucleotide sequence ID" value="NM_001370465.2"/>
    <property type="RefSeq protein sequence ID" value="NP_001357394.1"/>
</dbReference>
<dbReference type="UCSC" id="uc002vzg.3">
    <property type="organism name" value="human"/>
</dbReference>
<dbReference type="AGR" id="HGNC:33237"/>
<dbReference type="CTD" id="285193"/>
<dbReference type="DisGeNET" id="285193"/>
<dbReference type="GeneCards" id="DUSP28"/>
<dbReference type="HGNC" id="HGNC:33237">
    <property type="gene designation" value="DUSP28"/>
</dbReference>
<dbReference type="HPA" id="ENSG00000188542">
    <property type="expression patterns" value="Low tissue specificity"/>
</dbReference>
<dbReference type="neXtProt" id="NX_Q4G0W2"/>
<dbReference type="OpenTargets" id="ENSG00000188542"/>
<dbReference type="PharmGKB" id="PA162384124"/>
<dbReference type="VEuPathDB" id="HostDB:ENSG00000188542"/>
<dbReference type="eggNOG" id="KOG1718">
    <property type="taxonomic scope" value="Eukaryota"/>
</dbReference>
<dbReference type="GeneTree" id="ENSGT00940000161528"/>
<dbReference type="InParanoid" id="Q4G0W2"/>
<dbReference type="OMA" id="THLEPTC"/>
<dbReference type="OrthoDB" id="285418at2759"/>
<dbReference type="PAN-GO" id="Q4G0W2">
    <property type="GO annotations" value="0 GO annotations based on evolutionary models"/>
</dbReference>
<dbReference type="PhylomeDB" id="Q4G0W2"/>
<dbReference type="TreeFam" id="TF105128"/>
<dbReference type="PathwayCommons" id="Q4G0W2"/>
<dbReference type="SignaLink" id="Q4G0W2"/>
<dbReference type="BioGRID-ORCS" id="285193">
    <property type="hits" value="19 hits in 1171 CRISPR screens"/>
</dbReference>
<dbReference type="GenomeRNAi" id="285193"/>
<dbReference type="Pharos" id="Q4G0W2">
    <property type="development level" value="Tbio"/>
</dbReference>
<dbReference type="PRO" id="PR:Q4G0W2"/>
<dbReference type="Proteomes" id="UP000005640">
    <property type="component" value="Chromosome 2"/>
</dbReference>
<dbReference type="RNAct" id="Q4G0W2">
    <property type="molecule type" value="protein"/>
</dbReference>
<dbReference type="Bgee" id="ENSG00000188542">
    <property type="expression patterns" value="Expressed in vastus lateralis and 172 other cell types or tissues"/>
</dbReference>
<dbReference type="ExpressionAtlas" id="Q4G0W2">
    <property type="expression patterns" value="baseline and differential"/>
</dbReference>
<dbReference type="GO" id="GO:0016791">
    <property type="term" value="F:phosphatase activity"/>
    <property type="evidence" value="ECO:0000314"/>
    <property type="project" value="UniProtKB"/>
</dbReference>
<dbReference type="GO" id="GO:0004722">
    <property type="term" value="F:protein serine/threonine phosphatase activity"/>
    <property type="evidence" value="ECO:0007669"/>
    <property type="project" value="UniProtKB-EC"/>
</dbReference>
<dbReference type="GO" id="GO:0004725">
    <property type="term" value="F:protein tyrosine phosphatase activity"/>
    <property type="evidence" value="ECO:0007669"/>
    <property type="project" value="UniProtKB-EC"/>
</dbReference>
<dbReference type="GO" id="GO:0016311">
    <property type="term" value="P:dephosphorylation"/>
    <property type="evidence" value="ECO:0000314"/>
    <property type="project" value="UniProtKB"/>
</dbReference>
<dbReference type="CDD" id="cd14574">
    <property type="entry name" value="DUSP28"/>
    <property type="match status" value="1"/>
</dbReference>
<dbReference type="FunFam" id="3.90.190.10:FF:000107">
    <property type="entry name" value="Dual specificity phosphatase 28"/>
    <property type="match status" value="1"/>
</dbReference>
<dbReference type="Gene3D" id="3.90.190.10">
    <property type="entry name" value="Protein tyrosine phosphatase superfamily"/>
    <property type="match status" value="1"/>
</dbReference>
<dbReference type="InterPro" id="IPR000340">
    <property type="entry name" value="Dual-sp_phosphatase_cat-dom"/>
</dbReference>
<dbReference type="InterPro" id="IPR052103">
    <property type="entry name" value="Dual_spec_Phospatases"/>
</dbReference>
<dbReference type="InterPro" id="IPR029021">
    <property type="entry name" value="Prot-tyrosine_phosphatase-like"/>
</dbReference>
<dbReference type="InterPro" id="IPR000387">
    <property type="entry name" value="Tyr_Pase_dom"/>
</dbReference>
<dbReference type="InterPro" id="IPR020422">
    <property type="entry name" value="TYR_PHOSPHATASE_DUAL_dom"/>
</dbReference>
<dbReference type="PANTHER" id="PTHR45961:SF7">
    <property type="entry name" value="DUAL SPECIFICITY PHOSPHATASE 28"/>
    <property type="match status" value="1"/>
</dbReference>
<dbReference type="PANTHER" id="PTHR45961">
    <property type="entry name" value="IP21249P"/>
    <property type="match status" value="1"/>
</dbReference>
<dbReference type="Pfam" id="PF00782">
    <property type="entry name" value="DSPc"/>
    <property type="match status" value="1"/>
</dbReference>
<dbReference type="SMART" id="SM00195">
    <property type="entry name" value="DSPc"/>
    <property type="match status" value="1"/>
</dbReference>
<dbReference type="SUPFAM" id="SSF52799">
    <property type="entry name" value="(Phosphotyrosine protein) phosphatases II"/>
    <property type="match status" value="1"/>
</dbReference>
<dbReference type="PROSITE" id="PS50056">
    <property type="entry name" value="TYR_PHOSPHATASE_2"/>
    <property type="match status" value="1"/>
</dbReference>
<dbReference type="PROSITE" id="PS50054">
    <property type="entry name" value="TYR_PHOSPHATASE_DUAL"/>
    <property type="match status" value="1"/>
</dbReference>
<sequence length="176" mass="18324">MGPAEAGRRGAASPVPPPLVRVAPSLFLGSARAAGAEEQLARAGVTLCVNVSRQQPGPRAPGVAELRVPVFDDPAEDLLAHLEPTCAAMEAAVRAGGACLVYCKNGRSRSAAVCTAYLMRHRGLSLAKAFQMVKSARPVAEPNPGFWSQLQKYEEALQAQSCLQGEPPALGLGPEA</sequence>